<keyword id="KW-1003">Cell membrane</keyword>
<keyword id="KW-0134">Cell wall</keyword>
<keyword id="KW-0472">Membrane</keyword>
<keyword id="KW-1185">Reference proteome</keyword>
<keyword id="KW-0964">Secreted</keyword>
<keyword id="KW-0812">Transmembrane</keyword>
<keyword id="KW-1133">Transmembrane helix</keyword>
<name>LYRA_STAEQ</name>
<dbReference type="EMBL" id="CP000029">
    <property type="protein sequence ID" value="AAW55254.1"/>
    <property type="molecule type" value="Genomic_DNA"/>
</dbReference>
<dbReference type="RefSeq" id="WP_001831571.1">
    <property type="nucleotide sequence ID" value="NC_002976.3"/>
</dbReference>
<dbReference type="SMR" id="Q5HLR3"/>
<dbReference type="STRING" id="176279.SERP1920"/>
<dbReference type="KEGG" id="ser:SERP1920"/>
<dbReference type="eggNOG" id="COG1266">
    <property type="taxonomic scope" value="Bacteria"/>
</dbReference>
<dbReference type="HOGENOM" id="CLU_046135_0_0_9"/>
<dbReference type="Proteomes" id="UP000000531">
    <property type="component" value="Chromosome"/>
</dbReference>
<dbReference type="GO" id="GO:0005886">
    <property type="term" value="C:plasma membrane"/>
    <property type="evidence" value="ECO:0007669"/>
    <property type="project" value="UniProtKB-SubCell"/>
</dbReference>
<dbReference type="GO" id="GO:0004175">
    <property type="term" value="F:endopeptidase activity"/>
    <property type="evidence" value="ECO:0007669"/>
    <property type="project" value="UniProtKB-ARBA"/>
</dbReference>
<dbReference type="GO" id="GO:0080120">
    <property type="term" value="P:CAAX-box protein maturation"/>
    <property type="evidence" value="ECO:0007669"/>
    <property type="project" value="UniProtKB-ARBA"/>
</dbReference>
<dbReference type="InterPro" id="IPR036259">
    <property type="entry name" value="MFS_trans_sf"/>
</dbReference>
<dbReference type="InterPro" id="IPR003675">
    <property type="entry name" value="Rce1/LyrA-like_dom"/>
</dbReference>
<dbReference type="Pfam" id="PF02517">
    <property type="entry name" value="Rce1-like"/>
    <property type="match status" value="1"/>
</dbReference>
<dbReference type="SUPFAM" id="SSF103473">
    <property type="entry name" value="MFS general substrate transporter"/>
    <property type="match status" value="1"/>
</dbReference>
<protein>
    <recommendedName>
        <fullName>Lysostaphin resistance protein A</fullName>
    </recommendedName>
    <alternativeName>
        <fullName evidence="1">Surface protein display C</fullName>
    </alternativeName>
</protein>
<evidence type="ECO:0000250" key="1">
    <source>
        <dbReference type="UniProtKB" id="A0A0H3KA40"/>
    </source>
</evidence>
<evidence type="ECO:0000250" key="2">
    <source>
        <dbReference type="UniProtKB" id="Q2FVT1"/>
    </source>
</evidence>
<evidence type="ECO:0000255" key="3"/>
<evidence type="ECO:0000256" key="4">
    <source>
        <dbReference type="SAM" id="MobiDB-lite"/>
    </source>
</evidence>
<evidence type="ECO:0000305" key="5"/>
<sequence length="382" mass="43177">MKNSRFSGFQWAMMVFVFFVITMALSVILRDFQATIGVKRFVFSIKDLAPFIAAIVCILVFKHRKEQLAGLKFSISLKVIERLLLALILPLIILMIGLFSFNTYADSFILLQTSDLSVSLLTILIGHILMAFVVEFGFRSYLQNILETRMNTFFASIVVGLIYSVFTANTTYGVEYAGYHFLYTFMFSMIIGELIRATNGRTIYIATAFHASMTFALVFLFSEETGDLFSMKVIALSTTIVGVSFIIISLIIRAIVYKTTKQSLDEVDPNNYLSHIQDEEPSQEDASSTSNHDVSSKDETKQQDIDNDKHQSKKPNKSDDALTTSNYKEDASSVNKETDTTHNDNIKDHSTYTEDRHSSVVNDVKDEIHEVEDHKADTDKSH</sequence>
<feature type="chain" id="PRO_0000274830" description="Lysostaphin resistance protein A">
    <location>
        <begin position="1"/>
        <end position="382"/>
    </location>
</feature>
<feature type="transmembrane region" description="Helical" evidence="3">
    <location>
        <begin position="9"/>
        <end position="29"/>
    </location>
</feature>
<feature type="transmembrane region" description="Helical" evidence="3">
    <location>
        <begin position="41"/>
        <end position="61"/>
    </location>
</feature>
<feature type="transmembrane region" description="Helical" evidence="3">
    <location>
        <begin position="83"/>
        <end position="103"/>
    </location>
</feature>
<feature type="transmembrane region" description="Helical" evidence="3">
    <location>
        <begin position="118"/>
        <end position="138"/>
    </location>
</feature>
<feature type="transmembrane region" description="Helical" evidence="3">
    <location>
        <begin position="153"/>
        <end position="173"/>
    </location>
</feature>
<feature type="transmembrane region" description="Helical" evidence="3">
    <location>
        <begin position="175"/>
        <end position="195"/>
    </location>
</feature>
<feature type="transmembrane region" description="Helical" evidence="3">
    <location>
        <begin position="202"/>
        <end position="222"/>
    </location>
</feature>
<feature type="transmembrane region" description="Helical" evidence="3">
    <location>
        <begin position="232"/>
        <end position="252"/>
    </location>
</feature>
<feature type="region of interest" description="Disordered" evidence="4">
    <location>
        <begin position="278"/>
        <end position="382"/>
    </location>
</feature>
<feature type="compositionally biased region" description="Polar residues" evidence="4">
    <location>
        <begin position="284"/>
        <end position="293"/>
    </location>
</feature>
<feature type="compositionally biased region" description="Basic and acidic residues" evidence="4">
    <location>
        <begin position="294"/>
        <end position="320"/>
    </location>
</feature>
<feature type="compositionally biased region" description="Basic and acidic residues" evidence="4">
    <location>
        <begin position="327"/>
        <end position="382"/>
    </location>
</feature>
<comment type="function">
    <text evidence="2">Involved in bacterial cell envelope homeostasis. Regulates peptidoglycan processing, perhaps acting as a scaffold protein.</text>
</comment>
<comment type="subcellular location">
    <subcellularLocation>
        <location evidence="2">Cell membrane</location>
        <topology evidence="2">Multi-pass membrane protein</topology>
    </subcellularLocation>
    <subcellularLocation>
        <location evidence="1">Secreted</location>
        <location evidence="1">Cell wall</location>
    </subcellularLocation>
    <subcellularLocation>
        <location evidence="2">Cell septum</location>
    </subcellularLocation>
    <text evidence="1">Localization to the cross-wall is enriched in dividing cells.</text>
</comment>
<comment type="similarity">
    <text evidence="5">Belongs to the LyrA family.</text>
</comment>
<accession>Q5HLR3</accession>
<organism>
    <name type="scientific">Staphylococcus epidermidis (strain ATCC 35984 / DSM 28319 / BCRC 17069 / CCUG 31568 / BM 3577 / RP62A)</name>
    <dbReference type="NCBI Taxonomy" id="176279"/>
    <lineage>
        <taxon>Bacteria</taxon>
        <taxon>Bacillati</taxon>
        <taxon>Bacillota</taxon>
        <taxon>Bacilli</taxon>
        <taxon>Bacillales</taxon>
        <taxon>Staphylococcaceae</taxon>
        <taxon>Staphylococcus</taxon>
    </lineage>
</organism>
<proteinExistence type="inferred from homology"/>
<gene>
    <name type="primary">lyrA</name>
    <name evidence="1" type="synonym">spdC</name>
    <name type="ordered locus">SERP1920</name>
</gene>
<reference key="1">
    <citation type="journal article" date="2005" name="J. Bacteriol.">
        <title>Insights on evolution of virulence and resistance from the complete genome analysis of an early methicillin-resistant Staphylococcus aureus strain and a biofilm-producing methicillin-resistant Staphylococcus epidermidis strain.</title>
        <authorList>
            <person name="Gill S.R."/>
            <person name="Fouts D.E."/>
            <person name="Archer G.L."/>
            <person name="Mongodin E.F."/>
            <person name="DeBoy R.T."/>
            <person name="Ravel J."/>
            <person name="Paulsen I.T."/>
            <person name="Kolonay J.F."/>
            <person name="Brinkac L.M."/>
            <person name="Beanan M.J."/>
            <person name="Dodson R.J."/>
            <person name="Daugherty S.C."/>
            <person name="Madupu R."/>
            <person name="Angiuoli S.V."/>
            <person name="Durkin A.S."/>
            <person name="Haft D.H."/>
            <person name="Vamathevan J.J."/>
            <person name="Khouri H."/>
            <person name="Utterback T.R."/>
            <person name="Lee C."/>
            <person name="Dimitrov G."/>
            <person name="Jiang L."/>
            <person name="Qin H."/>
            <person name="Weidman J."/>
            <person name="Tran K."/>
            <person name="Kang K.H."/>
            <person name="Hance I.R."/>
            <person name="Nelson K.E."/>
            <person name="Fraser C.M."/>
        </authorList>
    </citation>
    <scope>NUCLEOTIDE SEQUENCE [LARGE SCALE GENOMIC DNA]</scope>
    <source>
        <strain>ATCC 35984 / DSM 28319 / BCRC 17069 / CCUG 31568 / BM 3577 / RP62A</strain>
    </source>
</reference>